<reference key="1">
    <citation type="journal article" date="2000" name="Nature">
        <title>Genome sequence of the endocellular bacterial symbiont of aphids Buchnera sp. APS.</title>
        <authorList>
            <person name="Shigenobu S."/>
            <person name="Watanabe H."/>
            <person name="Hattori M."/>
            <person name="Sakaki Y."/>
            <person name="Ishikawa H."/>
        </authorList>
    </citation>
    <scope>NUCLEOTIDE SEQUENCE [LARGE SCALE GENOMIC DNA]</scope>
    <source>
        <strain>APS</strain>
    </source>
</reference>
<name>GYRB_BUCAI</name>
<sequence>MKNIYDSSNIKILRGLDAVRKRPGMYIGDTDDGSGLHHMVFEIVDNSIDEALSGYCKEIIVTIHSDNSVSVKDDGRGIPTDIHPEENISAAEVILTVLHSGGKFDNASYQISGGLHGVGISVVNALSEKLELIIDKNKKKYQQIYRHGKPENPLSIIGTTDTTGTYIRFWPSYKTFTNNIKFQYEILSKRLRELSFLNSNIAIYLEDNRTSIKNCYHYKGGIKAFIKFLNAKKTPIHTHIFYFRSTKDQIELEIAMQWNNSHQENILCFTNNIPQKDGGTHLAGFRSGMTRTLNLHIEREGYNKKNKTTIIGEDVREGLTAIISIKIPDPKFSSQTKDKLVSSEARSVIESLINENLIEYLLENPSDSKFIIQKIINAAKVREAARRAREINKKKSILDLGALPGKLSDCQENDPKFSEIYLVEGDSAGGSAKQGRNRKNQAILPLKGKILNVEKSKFDKMILSQEVASLITALGCGIGKNEYNIDKLRYHYIIIMTDADVDGAHIRTLLLTFFYRQLPELIEKGYVYIAQPPLYKLKKGRKEKYIKNDEEMNTYQIKNALKDLVLKSEDNLIINQKLKKFKKIMSEYHYIQIIMKQSKHYFPKLVFNELIYHNHLHNLKDIEIVKEWIYTLAENLNKKDNSNNHYSIEIKENLDKNIFEPTIKISRYAHYTKYDFKEEFLKSKEYLLITNLGESFKKYFSDKVLIEKSGSTYKIDSIKNTWKWLIKQSKRGLFIQRYKGLGEMNPEQLWNTTMNPETRNMLQVTIKDAVSANNLFNTLMGEAVEPRRQFIENNALKAENIDV</sequence>
<accession>P57126</accession>
<feature type="chain" id="PRO_0000145298" description="DNA gyrase subunit B">
    <location>
        <begin position="1"/>
        <end position="803"/>
    </location>
</feature>
<feature type="domain" description="Toprim" evidence="1">
    <location>
        <begin position="418"/>
        <end position="533"/>
    </location>
</feature>
<feature type="binding site" evidence="1">
    <location>
        <position position="424"/>
    </location>
    <ligand>
        <name>Mg(2+)</name>
        <dbReference type="ChEBI" id="CHEBI:18420"/>
        <label>1</label>
        <note>catalytic</note>
    </ligand>
</feature>
<feature type="binding site" evidence="1">
    <location>
        <position position="498"/>
    </location>
    <ligand>
        <name>Mg(2+)</name>
        <dbReference type="ChEBI" id="CHEBI:18420"/>
        <label>1</label>
        <note>catalytic</note>
    </ligand>
</feature>
<feature type="binding site" evidence="1">
    <location>
        <position position="498"/>
    </location>
    <ligand>
        <name>Mg(2+)</name>
        <dbReference type="ChEBI" id="CHEBI:18420"/>
        <label>2</label>
    </ligand>
</feature>
<feature type="binding site" evidence="1">
    <location>
        <position position="500"/>
    </location>
    <ligand>
        <name>Mg(2+)</name>
        <dbReference type="ChEBI" id="CHEBI:18420"/>
        <label>2</label>
    </ligand>
</feature>
<feature type="site" description="Interaction with DNA" evidence="1">
    <location>
        <position position="449"/>
    </location>
</feature>
<feature type="site" description="Interaction with DNA" evidence="1">
    <location>
        <position position="452"/>
    </location>
</feature>
<organism>
    <name type="scientific">Buchnera aphidicola subsp. Acyrthosiphon pisum (strain APS)</name>
    <name type="common">Acyrthosiphon pisum symbiotic bacterium</name>
    <dbReference type="NCBI Taxonomy" id="107806"/>
    <lineage>
        <taxon>Bacteria</taxon>
        <taxon>Pseudomonadati</taxon>
        <taxon>Pseudomonadota</taxon>
        <taxon>Gammaproteobacteria</taxon>
        <taxon>Enterobacterales</taxon>
        <taxon>Erwiniaceae</taxon>
        <taxon>Buchnera</taxon>
    </lineage>
</organism>
<proteinExistence type="inferred from homology"/>
<protein>
    <recommendedName>
        <fullName evidence="1">DNA gyrase subunit B</fullName>
        <ecNumber evidence="1">5.6.2.2</ecNumber>
    </recommendedName>
</protein>
<keyword id="KW-0067">ATP-binding</keyword>
<keyword id="KW-0963">Cytoplasm</keyword>
<keyword id="KW-0238">DNA-binding</keyword>
<keyword id="KW-0413">Isomerase</keyword>
<keyword id="KW-0460">Magnesium</keyword>
<keyword id="KW-0479">Metal-binding</keyword>
<keyword id="KW-0547">Nucleotide-binding</keyword>
<keyword id="KW-1185">Reference proteome</keyword>
<keyword id="KW-0799">Topoisomerase</keyword>
<comment type="function">
    <text evidence="1">A type II topoisomerase that negatively supercoils closed circular double-stranded (ds) DNA in an ATP-dependent manner to modulate DNA topology and maintain chromosomes in an underwound state. Negative supercoiling favors strand separation, and DNA replication, transcription, recombination and repair, all of which involve strand separation. Also able to catalyze the interconversion of other topological isomers of dsDNA rings, including catenanes and knotted rings. Type II topoisomerases break and join 2 DNA strands simultaneously in an ATP-dependent manner.</text>
</comment>
<comment type="catalytic activity">
    <reaction evidence="1">
        <text>ATP-dependent breakage, passage and rejoining of double-stranded DNA.</text>
        <dbReference type="EC" id="5.6.2.2"/>
    </reaction>
</comment>
<comment type="cofactor">
    <cofactor evidence="1">
        <name>Mg(2+)</name>
        <dbReference type="ChEBI" id="CHEBI:18420"/>
    </cofactor>
    <cofactor evidence="1">
        <name>Mn(2+)</name>
        <dbReference type="ChEBI" id="CHEBI:29035"/>
    </cofactor>
    <cofactor evidence="1">
        <name>Ca(2+)</name>
        <dbReference type="ChEBI" id="CHEBI:29108"/>
    </cofactor>
    <text evidence="1">Binds two Mg(2+) per subunit. The magnesium ions form salt bridges with both the protein and the DNA. Can also accept other divalent metal cations, such as Mn(2+) or Ca(2+).</text>
</comment>
<comment type="subunit">
    <text evidence="1">Heterotetramer, composed of two GyrA and two GyrB chains. In the heterotetramer, GyrA contains the active site tyrosine that forms a transient covalent intermediate with DNA, while GyrB binds cofactors and catalyzes ATP hydrolysis.</text>
</comment>
<comment type="subcellular location">
    <subcellularLocation>
        <location evidence="1">Cytoplasm</location>
    </subcellularLocation>
</comment>
<comment type="miscellaneous">
    <text evidence="1">Few gyrases are as efficient as E.coli at forming negative supercoils. Not all organisms have 2 type II topoisomerases; in organisms with a single type II topoisomerase this enzyme also has to decatenate newly replicated chromosomes.</text>
</comment>
<comment type="similarity">
    <text evidence="1">Belongs to the type II topoisomerase GyrB family.</text>
</comment>
<evidence type="ECO:0000255" key="1">
    <source>
        <dbReference type="HAMAP-Rule" id="MF_01898"/>
    </source>
</evidence>
<dbReference type="EC" id="5.6.2.2" evidence="1"/>
<dbReference type="EMBL" id="BA000003">
    <property type="protein sequence ID" value="BAB12738.1"/>
    <property type="molecule type" value="Genomic_DNA"/>
</dbReference>
<dbReference type="RefSeq" id="NP_239852.1">
    <property type="nucleotide sequence ID" value="NC_002528.1"/>
</dbReference>
<dbReference type="RefSeq" id="WP_010895901.1">
    <property type="nucleotide sequence ID" value="NC_002528.1"/>
</dbReference>
<dbReference type="SMR" id="P57126"/>
<dbReference type="STRING" id="563178.BUAP5A_010"/>
<dbReference type="EnsemblBacteria" id="BAB12738">
    <property type="protein sequence ID" value="BAB12738"/>
    <property type="gene ID" value="BAB12738"/>
</dbReference>
<dbReference type="KEGG" id="buc:BU010"/>
<dbReference type="PATRIC" id="fig|107806.10.peg.23"/>
<dbReference type="eggNOG" id="COG0187">
    <property type="taxonomic scope" value="Bacteria"/>
</dbReference>
<dbReference type="HOGENOM" id="CLU_006146_4_1_6"/>
<dbReference type="Proteomes" id="UP000001806">
    <property type="component" value="Chromosome"/>
</dbReference>
<dbReference type="GO" id="GO:0005694">
    <property type="term" value="C:chromosome"/>
    <property type="evidence" value="ECO:0007669"/>
    <property type="project" value="InterPro"/>
</dbReference>
<dbReference type="GO" id="GO:0005737">
    <property type="term" value="C:cytoplasm"/>
    <property type="evidence" value="ECO:0007669"/>
    <property type="project" value="UniProtKB-SubCell"/>
</dbReference>
<dbReference type="GO" id="GO:0005524">
    <property type="term" value="F:ATP binding"/>
    <property type="evidence" value="ECO:0007669"/>
    <property type="project" value="UniProtKB-UniRule"/>
</dbReference>
<dbReference type="GO" id="GO:0003677">
    <property type="term" value="F:DNA binding"/>
    <property type="evidence" value="ECO:0007669"/>
    <property type="project" value="UniProtKB-KW"/>
</dbReference>
<dbReference type="GO" id="GO:0003918">
    <property type="term" value="F:DNA topoisomerase type II (double strand cut, ATP-hydrolyzing) activity"/>
    <property type="evidence" value="ECO:0007669"/>
    <property type="project" value="UniProtKB-UniRule"/>
</dbReference>
<dbReference type="GO" id="GO:0046872">
    <property type="term" value="F:metal ion binding"/>
    <property type="evidence" value="ECO:0007669"/>
    <property type="project" value="UniProtKB-KW"/>
</dbReference>
<dbReference type="GO" id="GO:0006265">
    <property type="term" value="P:DNA topological change"/>
    <property type="evidence" value="ECO:0007669"/>
    <property type="project" value="UniProtKB-UniRule"/>
</dbReference>
<dbReference type="GO" id="GO:0006261">
    <property type="term" value="P:DNA-templated DNA replication"/>
    <property type="evidence" value="ECO:0007669"/>
    <property type="project" value="UniProtKB-UniRule"/>
</dbReference>
<dbReference type="CDD" id="cd16928">
    <property type="entry name" value="HATPase_GyrB-like"/>
    <property type="match status" value="1"/>
</dbReference>
<dbReference type="CDD" id="cd00822">
    <property type="entry name" value="TopoII_Trans_DNA_gyrase"/>
    <property type="match status" value="1"/>
</dbReference>
<dbReference type="CDD" id="cd03366">
    <property type="entry name" value="TOPRIM_TopoIIA_GyrB"/>
    <property type="match status" value="1"/>
</dbReference>
<dbReference type="FunFam" id="3.30.230.10:FF:000005">
    <property type="entry name" value="DNA gyrase subunit B"/>
    <property type="match status" value="1"/>
</dbReference>
<dbReference type="FunFam" id="3.30.565.10:FF:000002">
    <property type="entry name" value="DNA gyrase subunit B"/>
    <property type="match status" value="1"/>
</dbReference>
<dbReference type="FunFam" id="3.40.50.670:FF:000004">
    <property type="entry name" value="DNA gyrase subunit B"/>
    <property type="match status" value="1"/>
</dbReference>
<dbReference type="FunFam" id="3.40.50.670:FF:000001">
    <property type="entry name" value="DNA topoisomerase 2"/>
    <property type="match status" value="1"/>
</dbReference>
<dbReference type="Gene3D" id="3.10.20.690">
    <property type="match status" value="1"/>
</dbReference>
<dbReference type="Gene3D" id="3.30.230.10">
    <property type="match status" value="1"/>
</dbReference>
<dbReference type="Gene3D" id="3.40.50.670">
    <property type="match status" value="2"/>
</dbReference>
<dbReference type="Gene3D" id="3.30.565.10">
    <property type="entry name" value="Histidine kinase-like ATPase, C-terminal domain"/>
    <property type="match status" value="1"/>
</dbReference>
<dbReference type="HAMAP" id="MF_01898">
    <property type="entry name" value="GyrB"/>
    <property type="match status" value="1"/>
</dbReference>
<dbReference type="InterPro" id="IPR002288">
    <property type="entry name" value="DNA_gyrase_B_C"/>
</dbReference>
<dbReference type="InterPro" id="IPR011557">
    <property type="entry name" value="GyrB"/>
</dbReference>
<dbReference type="InterPro" id="IPR049353">
    <property type="entry name" value="GyrB_hook"/>
</dbReference>
<dbReference type="InterPro" id="IPR041423">
    <property type="entry name" value="GyrB_insert"/>
</dbReference>
<dbReference type="InterPro" id="IPR036890">
    <property type="entry name" value="HATPase_C_sf"/>
</dbReference>
<dbReference type="InterPro" id="IPR020568">
    <property type="entry name" value="Ribosomal_Su5_D2-typ_SF"/>
</dbReference>
<dbReference type="InterPro" id="IPR014721">
    <property type="entry name" value="Ribsml_uS5_D2-typ_fold_subgr"/>
</dbReference>
<dbReference type="InterPro" id="IPR001241">
    <property type="entry name" value="Topo_IIA"/>
</dbReference>
<dbReference type="InterPro" id="IPR013760">
    <property type="entry name" value="Topo_IIA-like_dom_sf"/>
</dbReference>
<dbReference type="InterPro" id="IPR000565">
    <property type="entry name" value="Topo_IIA_B"/>
</dbReference>
<dbReference type="InterPro" id="IPR013759">
    <property type="entry name" value="Topo_IIA_B_C"/>
</dbReference>
<dbReference type="InterPro" id="IPR013506">
    <property type="entry name" value="Topo_IIA_bsu_dom2"/>
</dbReference>
<dbReference type="InterPro" id="IPR018522">
    <property type="entry name" value="TopoIIA_CS"/>
</dbReference>
<dbReference type="InterPro" id="IPR006171">
    <property type="entry name" value="TOPRIM_dom"/>
</dbReference>
<dbReference type="InterPro" id="IPR034160">
    <property type="entry name" value="TOPRIM_GyrB"/>
</dbReference>
<dbReference type="NCBIfam" id="TIGR01059">
    <property type="entry name" value="gyrB"/>
    <property type="match status" value="1"/>
</dbReference>
<dbReference type="NCBIfam" id="NF004189">
    <property type="entry name" value="PRK05644.1"/>
    <property type="match status" value="1"/>
</dbReference>
<dbReference type="NCBIfam" id="NF011501">
    <property type="entry name" value="PRK14939.1"/>
    <property type="match status" value="1"/>
</dbReference>
<dbReference type="PANTHER" id="PTHR45866:SF1">
    <property type="entry name" value="DNA GYRASE SUBUNIT B, MITOCHONDRIAL"/>
    <property type="match status" value="1"/>
</dbReference>
<dbReference type="PANTHER" id="PTHR45866">
    <property type="entry name" value="DNA GYRASE/TOPOISOMERASE SUBUNIT B"/>
    <property type="match status" value="1"/>
</dbReference>
<dbReference type="Pfam" id="PF00204">
    <property type="entry name" value="DNA_gyraseB"/>
    <property type="match status" value="1"/>
</dbReference>
<dbReference type="Pfam" id="PF00986">
    <property type="entry name" value="DNA_gyraseB_C"/>
    <property type="match status" value="1"/>
</dbReference>
<dbReference type="Pfam" id="PF21249">
    <property type="entry name" value="GyrB_hook"/>
    <property type="match status" value="1"/>
</dbReference>
<dbReference type="Pfam" id="PF18053">
    <property type="entry name" value="GyrB_insert"/>
    <property type="match status" value="1"/>
</dbReference>
<dbReference type="Pfam" id="PF02518">
    <property type="entry name" value="HATPase_c"/>
    <property type="match status" value="1"/>
</dbReference>
<dbReference type="Pfam" id="PF01751">
    <property type="entry name" value="Toprim"/>
    <property type="match status" value="1"/>
</dbReference>
<dbReference type="PRINTS" id="PR01159">
    <property type="entry name" value="DNAGYRASEB"/>
</dbReference>
<dbReference type="PRINTS" id="PR00418">
    <property type="entry name" value="TPI2FAMILY"/>
</dbReference>
<dbReference type="SMART" id="SM00387">
    <property type="entry name" value="HATPase_c"/>
    <property type="match status" value="1"/>
</dbReference>
<dbReference type="SMART" id="SM00433">
    <property type="entry name" value="TOP2c"/>
    <property type="match status" value="1"/>
</dbReference>
<dbReference type="SUPFAM" id="SSF55874">
    <property type="entry name" value="ATPase domain of HSP90 chaperone/DNA topoisomerase II/histidine kinase"/>
    <property type="match status" value="1"/>
</dbReference>
<dbReference type="SUPFAM" id="SSF54211">
    <property type="entry name" value="Ribosomal protein S5 domain 2-like"/>
    <property type="match status" value="1"/>
</dbReference>
<dbReference type="SUPFAM" id="SSF56719">
    <property type="entry name" value="Type II DNA topoisomerase"/>
    <property type="match status" value="1"/>
</dbReference>
<dbReference type="PROSITE" id="PS00177">
    <property type="entry name" value="TOPOISOMERASE_II"/>
    <property type="match status" value="1"/>
</dbReference>
<dbReference type="PROSITE" id="PS50880">
    <property type="entry name" value="TOPRIM"/>
    <property type="match status" value="1"/>
</dbReference>
<gene>
    <name evidence="1" type="primary">gyrB</name>
    <name type="ordered locus">BU010</name>
</gene>